<reference key="1">
    <citation type="journal article" date="2002" name="Nature">
        <title>Genome sequence of the human malaria parasite Plasmodium falciparum.</title>
        <authorList>
            <person name="Gardner M.J."/>
            <person name="Hall N."/>
            <person name="Fung E."/>
            <person name="White O."/>
            <person name="Berriman M."/>
            <person name="Hyman R.W."/>
            <person name="Carlton J.M."/>
            <person name="Pain A."/>
            <person name="Nelson K.E."/>
            <person name="Bowman S."/>
            <person name="Paulsen I.T."/>
            <person name="James K.D."/>
            <person name="Eisen J.A."/>
            <person name="Rutherford K.M."/>
            <person name="Salzberg S.L."/>
            <person name="Craig A."/>
            <person name="Kyes S."/>
            <person name="Chan M.-S."/>
            <person name="Nene V."/>
            <person name="Shallom S.J."/>
            <person name="Suh B."/>
            <person name="Peterson J."/>
            <person name="Angiuoli S."/>
            <person name="Pertea M."/>
            <person name="Allen J."/>
            <person name="Selengut J."/>
            <person name="Haft D."/>
            <person name="Mather M.W."/>
            <person name="Vaidya A.B."/>
            <person name="Martin D.M.A."/>
            <person name="Fairlamb A.H."/>
            <person name="Fraunholz M.J."/>
            <person name="Roos D.S."/>
            <person name="Ralph S.A."/>
            <person name="McFadden G.I."/>
            <person name="Cummings L.M."/>
            <person name="Subramanian G.M."/>
            <person name="Mungall C."/>
            <person name="Venter J.C."/>
            <person name="Carucci D.J."/>
            <person name="Hoffman S.L."/>
            <person name="Newbold C."/>
            <person name="Davis R.W."/>
            <person name="Fraser C.M."/>
            <person name="Barrell B.G."/>
        </authorList>
    </citation>
    <scope>NUCLEOTIDE SEQUENCE [LARGE SCALE GENOMIC DNA]</scope>
    <source>
        <strain>3D7</strain>
    </source>
</reference>
<reference evidence="5" key="2">
    <citation type="journal article" date="2002" name="Nature">
        <title>Sequence of Plasmodium falciparum chromosomes 1, 3-9 and 13.</title>
        <authorList>
            <person name="Hall N."/>
            <person name="Pain A."/>
            <person name="Berriman M."/>
            <person name="Churcher C.M."/>
            <person name="Harris B."/>
            <person name="Harris D."/>
            <person name="Mungall K.L."/>
            <person name="Bowman S."/>
            <person name="Atkin R."/>
            <person name="Baker S."/>
            <person name="Barron A."/>
            <person name="Brooks K."/>
            <person name="Buckee C.O."/>
            <person name="Burrows C."/>
            <person name="Cherevach I."/>
            <person name="Chillingworth C."/>
            <person name="Chillingworth T."/>
            <person name="Christodoulou Z."/>
            <person name="Clark L."/>
            <person name="Clark R."/>
            <person name="Corton C."/>
            <person name="Cronin A."/>
            <person name="Davies R.M."/>
            <person name="Davis P."/>
            <person name="Dear P."/>
            <person name="Dearden F."/>
            <person name="Doggett J."/>
            <person name="Feltwell T."/>
            <person name="Goble A."/>
            <person name="Goodhead I."/>
            <person name="Gwilliam R."/>
            <person name="Hamlin N."/>
            <person name="Hance Z."/>
            <person name="Harper D."/>
            <person name="Hauser H."/>
            <person name="Hornsby T."/>
            <person name="Holroyd S."/>
            <person name="Horrocks P."/>
            <person name="Humphray S."/>
            <person name="Jagels K."/>
            <person name="James K.D."/>
            <person name="Johnson D."/>
            <person name="Kerhornou A."/>
            <person name="Knights A."/>
            <person name="Konfortov B."/>
            <person name="Kyes S."/>
            <person name="Larke N."/>
            <person name="Lawson D."/>
            <person name="Lennard N."/>
            <person name="Line A."/>
            <person name="Maddison M."/>
            <person name="Mclean J."/>
            <person name="Mooney P."/>
            <person name="Moule S."/>
            <person name="Murphy L."/>
            <person name="Oliver K."/>
            <person name="Ormond D."/>
            <person name="Price C."/>
            <person name="Quail M.A."/>
            <person name="Rabbinowitsch E."/>
            <person name="Rajandream M.A."/>
            <person name="Rutter S."/>
            <person name="Rutherford K.M."/>
            <person name="Sanders M."/>
            <person name="Simmonds M."/>
            <person name="Seeger K."/>
            <person name="Sharp S."/>
            <person name="Smith R."/>
            <person name="Squares R."/>
            <person name="Squares S."/>
            <person name="Stevens K."/>
            <person name="Taylor K."/>
            <person name="Tivey A."/>
            <person name="Unwin L."/>
            <person name="Whitehead S."/>
            <person name="Woodward J.R."/>
            <person name="Sulston J.E."/>
            <person name="Craig A."/>
            <person name="Newbold C."/>
            <person name="Barrell B.G."/>
        </authorList>
    </citation>
    <scope>NUCLEOTIDE SEQUENCE [LARGE SCALE GENOMIC DNA]</scope>
    <source>
        <strain>3D7</strain>
    </source>
</reference>
<reference evidence="4" key="3">
    <citation type="journal article" date="2007" name="PLoS ONE">
        <title>Rapid identification of malaria vaccine candidates based on alpha-helical coiled coil protein motif.</title>
        <authorList>
            <person name="Villard V."/>
            <person name="Agak G.W."/>
            <person name="Frank G."/>
            <person name="Jafarshad A."/>
            <person name="Servis C."/>
            <person name="Nebie I."/>
            <person name="Sirima S.B."/>
            <person name="Felger I."/>
            <person name="Arevalo-Herrera M."/>
            <person name="Herrera S."/>
            <person name="Heitz F."/>
            <person name="Baecker V."/>
            <person name="Druilhe P."/>
            <person name="Kajava A.V."/>
            <person name="Corradin G."/>
        </authorList>
    </citation>
    <scope>SYNTHESIS OF 780-862</scope>
    <scope>DEVELOPMENTAL STAGE</scope>
    <scope>POSSIBLE CANDIDATE MALARIA EPITOPE</scope>
</reference>
<gene>
    <name type="ORF">PFD1115c</name>
</gene>
<accession>Q8IFN0</accession>
<evidence type="ECO:0000255" key="1"/>
<evidence type="ECO:0000256" key="2">
    <source>
        <dbReference type="SAM" id="MobiDB-lite"/>
    </source>
</evidence>
<evidence type="ECO:0000269" key="3">
    <source>
    </source>
</evidence>
<evidence type="ECO:0000305" key="4"/>
<evidence type="ECO:0000312" key="5">
    <source>
        <dbReference type="EMBL" id="CAD49270.1"/>
    </source>
</evidence>
<protein>
    <recommendedName>
        <fullName>Uncharacterized protein PFD1115c</fullName>
    </recommendedName>
</protein>
<dbReference type="EMBL" id="AL844503">
    <property type="protein sequence ID" value="CAD49270.1"/>
    <property type="molecule type" value="Genomic_DNA"/>
</dbReference>
<dbReference type="RefSeq" id="XP_001351539.1">
    <property type="nucleotide sequence ID" value="XM_001351503.1"/>
</dbReference>
<dbReference type="BioGRID" id="1207776">
    <property type="interactions" value="1"/>
</dbReference>
<dbReference type="FunCoup" id="Q8IFN0">
    <property type="interactions" value="747"/>
</dbReference>
<dbReference type="IntAct" id="Q8IFN0">
    <property type="interactions" value="1"/>
</dbReference>
<dbReference type="STRING" id="36329.Q8IFN0"/>
<dbReference type="PaxDb" id="5833-PFD1115c"/>
<dbReference type="EnsemblProtists" id="CAD49270">
    <property type="protein sequence ID" value="CAD49270"/>
    <property type="gene ID" value="PF3D7_0423600"/>
</dbReference>
<dbReference type="KEGG" id="pfa:PF3D7_0423600"/>
<dbReference type="VEuPathDB" id="PlasmoDB:PF3D7_0423600"/>
<dbReference type="HOGENOM" id="CLU_256535_0_0_1"/>
<dbReference type="InParanoid" id="Q8IFN0"/>
<dbReference type="OMA" id="LMCDYLK"/>
<dbReference type="OrthoDB" id="332663at2759"/>
<dbReference type="PhylomeDB" id="Q8IFN0"/>
<dbReference type="Proteomes" id="UP000001450">
    <property type="component" value="Chromosome 4"/>
</dbReference>
<dbReference type="GO" id="GO:0016020">
    <property type="term" value="C:membrane"/>
    <property type="evidence" value="ECO:0007669"/>
    <property type="project" value="UniProtKB-SubCell"/>
</dbReference>
<dbReference type="Gene3D" id="1.20.5.170">
    <property type="match status" value="1"/>
</dbReference>
<dbReference type="Gene3D" id="1.20.5.340">
    <property type="match status" value="1"/>
</dbReference>
<dbReference type="PANTHER" id="PTHR15272:SF6">
    <property type="match status" value="1"/>
</dbReference>
<dbReference type="PANTHER" id="PTHR15272">
    <property type="entry name" value="CHROMATIN ASSEMBLY FACTOR 1 SUBUNIT A CAF-1 SUBUNIT A"/>
    <property type="match status" value="1"/>
</dbReference>
<dbReference type="SUPFAM" id="SSF58104">
    <property type="entry name" value="Methyl-accepting chemotaxis protein (MCP) signaling domain"/>
    <property type="match status" value="1"/>
</dbReference>
<comment type="subcellular location">
    <subcellularLocation>
        <location evidence="1">Membrane</location>
        <topology evidence="1">Single-pass membrane protein</topology>
    </subcellularLocation>
</comment>
<comment type="developmental stage">
    <text evidence="3">Expressed during the asexual cell-cycle on the cell surface of the host erythrocytes.</text>
</comment>
<comment type="biotechnology">
    <text evidence="3">Possible candidate for an effective malaria vaccine as determined by epitope response in sera.</text>
</comment>
<keyword id="KW-0175">Coiled coil</keyword>
<keyword id="KW-0472">Membrane</keyword>
<keyword id="KW-0477">Merozoite</keyword>
<keyword id="KW-1185">Reference proteome</keyword>
<keyword id="KW-0812">Transmembrane</keyword>
<keyword id="KW-1133">Transmembrane helix</keyword>
<name>YD115_PLAF7</name>
<feature type="chain" id="PRO_0000356831" description="Uncharacterized protein PFD1115c">
    <location>
        <begin position="1"/>
        <end position="1612"/>
    </location>
</feature>
<feature type="transmembrane region" description="Helical" evidence="1">
    <location>
        <begin position="479"/>
        <end position="499"/>
    </location>
</feature>
<feature type="region of interest" description="Disordered" evidence="2">
    <location>
        <begin position="46"/>
        <end position="94"/>
    </location>
</feature>
<feature type="region of interest" description="Disordered" evidence="2">
    <location>
        <begin position="369"/>
        <end position="400"/>
    </location>
</feature>
<feature type="region of interest" description="Disordered" evidence="2">
    <location>
        <begin position="698"/>
        <end position="777"/>
    </location>
</feature>
<feature type="region of interest" description="Disordered" evidence="2">
    <location>
        <begin position="992"/>
        <end position="1037"/>
    </location>
</feature>
<feature type="region of interest" description="Disordered" evidence="2">
    <location>
        <begin position="1091"/>
        <end position="1157"/>
    </location>
</feature>
<feature type="region of interest" description="Disordered" evidence="2">
    <location>
        <begin position="1257"/>
        <end position="1291"/>
    </location>
</feature>
<feature type="region of interest" description="Disordered" evidence="2">
    <location>
        <begin position="1554"/>
        <end position="1612"/>
    </location>
</feature>
<feature type="coiled-coil region" evidence="1">
    <location>
        <begin position="23"/>
        <end position="52"/>
    </location>
</feature>
<feature type="coiled-coil region" evidence="1">
    <location>
        <begin position="1338"/>
        <end position="1362"/>
    </location>
</feature>
<feature type="coiled-coil region" evidence="1">
    <location>
        <begin position="1444"/>
        <end position="1469"/>
    </location>
</feature>
<feature type="coiled-coil region" evidence="1">
    <location>
        <begin position="1553"/>
        <end position="1601"/>
    </location>
</feature>
<feature type="compositionally biased region" description="Basic and acidic residues" evidence="2">
    <location>
        <begin position="46"/>
        <end position="93"/>
    </location>
</feature>
<feature type="compositionally biased region" description="Polar residues" evidence="2">
    <location>
        <begin position="375"/>
        <end position="394"/>
    </location>
</feature>
<feature type="compositionally biased region" description="Basic and acidic residues" evidence="2">
    <location>
        <begin position="708"/>
        <end position="777"/>
    </location>
</feature>
<feature type="compositionally biased region" description="Low complexity" evidence="2">
    <location>
        <begin position="996"/>
        <end position="1028"/>
    </location>
</feature>
<feature type="compositionally biased region" description="Low complexity" evidence="2">
    <location>
        <begin position="1102"/>
        <end position="1140"/>
    </location>
</feature>
<feature type="compositionally biased region" description="Low complexity" evidence="2">
    <location>
        <begin position="1257"/>
        <end position="1271"/>
    </location>
</feature>
<feature type="compositionally biased region" description="Basic and acidic residues" evidence="2">
    <location>
        <begin position="1554"/>
        <end position="1566"/>
    </location>
</feature>
<feature type="compositionally biased region" description="Acidic residues" evidence="2">
    <location>
        <begin position="1567"/>
        <end position="1597"/>
    </location>
</feature>
<sequence length="1612" mass="190947">MNLLRKKVKNEKSLSTLLINEEENKNIEMTTLKDKKEMKNENLSKINVKKENHDKNHDKNHDKNHDKNHDKNHDKNHDKNHDKNHDKNHDKNHVKNNVEYYNDVFTHLYNCDDGGEEPKEYSHKKKQVNNKKKWKKQYKAVKLYMNMFLNNYKLKKGKGNCKNLSSVKKRRKKKKIIQNDYIRIINAEKEYVQKYHEDKIFLDNIKNVSSCELIKDCSYSVFFYNLFIKGLYLNKQNLEHATEKEHIQKNITKNITKNELHINKTSEHVSNITKLKKNYNKHNVILFKGKYTRQLICDYLKFLLNSIQNEHTIKAHFYILDYVNDLENKKKEMAKKIKMESFIFTNSNEEDKLCKDIILNCNILNEQKEDDNKSDNPLYSNNNTLKEQNTSTPLPSHEIQTESMNSPNLLNVKNMNQTKDDNGCTKEEIIKSNNLMKTYDIKINEHIYNKILNNFISELKSFFFSILEKIRSSKLLLRFIVTLSEICLILTPHYVNIINFIEILCDFGHIIPIHYISHFIHFFQCNKNIFIQKYKEFQHCIINNDPIKIQSVGARLIGFIKILQKKIHLNNNEQSMYSFFLNLLLSECLPINHLGFCNRQSAKNNFHYFFQESLDCCYKKFKEEQILYDNFELNIQNNIKNYKKIKTIIEHEIELNSDKYLIKEEDENFISAKNVISDEQDGEDTLYKKRKREEFKETSLTKKKQKKKNDEIKKTGEEKKKTGEEKKKTGEEKKKTGEEKKKTGEEKKKTGEEKKKTGEEKKKTGEEKKKTGEEKKLTNDVTHLTNDVTHLTNDVTHLTNDVTHLTNDVTHLTNDVTHLTNDVTHLTNDVTHLTNDVTHLTNDVTHLTNDVTHLTNDVTHLTNEKYIEEKDTKEMYLSYMSFISLVAFIKYPEIITQDNIILVEDVYNSFKTFLNYINSLEKEKKENFKRTKKYMNMIKAYLFNDHIDILANVHIFKVLVYDENFLRVLFFNILVVLNYLNRELQICVKDDNELDNNNNKNNNNNKNNNNNKNNNNNNNNNNNNNNNNDNGVKKNDPAIISPRSSFLFFVEYDKNDDHELGDPEKINNHLNGLMTRGHQKSIRENIKNKESGKSSILTTGTSNNNNNVNNMNNNMNNNMNNNMNNHMNSNNNVVDSNSTNFKENVKNKDNSNNRNMSVNQNILHNKTKDIKFCKENDDKFVIKEKIKKIMFTFVKELLNYLDGFINSNHNFMLAKEYSWYVWKKQLNVAKYNKDDYDISFKFKCIDENIKEQNYDINQTTNNNTYNNQTSNHMNENLHTDESSKSNNNQDKTVYTNEVSYLPNIPKKNKKTDNQSPVQTLINIIQNFELLNKKMKPFYCNNKNKNKNKNKNKNKNMEQINNKDITMNLCNNNNNIIHNKEQDNIQQHDDNNIINTNNDQSSYNNDIFHINNFLLEINKIYLRREAEFWELDESDSLTDEKKNDSNKKILIEKLIDKLDDYKKKINIDNDPINEIEENEKSKNNPVFKFRLSKLFILKYIDLYTIVKNKEFTTDCDFLYNLMIQMDKNVEKKKSLLNKGVVENDEDINVEHHINMEDEKNEKLNDKEGEYEDVTENLNEQEAEEEAEEEAEEEEEEEDKFLTPEHLPINVEIK</sequence>
<organism>
    <name type="scientific">Plasmodium falciparum (isolate 3D7)</name>
    <dbReference type="NCBI Taxonomy" id="36329"/>
    <lineage>
        <taxon>Eukaryota</taxon>
        <taxon>Sar</taxon>
        <taxon>Alveolata</taxon>
        <taxon>Apicomplexa</taxon>
        <taxon>Aconoidasida</taxon>
        <taxon>Haemosporida</taxon>
        <taxon>Plasmodiidae</taxon>
        <taxon>Plasmodium</taxon>
        <taxon>Plasmodium (Laverania)</taxon>
    </lineage>
</organism>
<proteinExistence type="evidence at protein level"/>